<proteinExistence type="inferred from homology"/>
<feature type="chain" id="PRO_1000002096" description="SsrA-binding protein">
    <location>
        <begin position="1"/>
        <end position="160"/>
    </location>
</feature>
<dbReference type="EMBL" id="CP000248">
    <property type="protein sequence ID" value="ABD25888.1"/>
    <property type="molecule type" value="Genomic_DNA"/>
</dbReference>
<dbReference type="RefSeq" id="WP_011445102.1">
    <property type="nucleotide sequence ID" value="NC_007794.1"/>
</dbReference>
<dbReference type="SMR" id="Q2G8D5"/>
<dbReference type="STRING" id="279238.Saro_1444"/>
<dbReference type="KEGG" id="nar:Saro_1444"/>
<dbReference type="eggNOG" id="COG0691">
    <property type="taxonomic scope" value="Bacteria"/>
</dbReference>
<dbReference type="HOGENOM" id="CLU_108953_0_1_5"/>
<dbReference type="Proteomes" id="UP000009134">
    <property type="component" value="Chromosome"/>
</dbReference>
<dbReference type="GO" id="GO:0005829">
    <property type="term" value="C:cytosol"/>
    <property type="evidence" value="ECO:0007669"/>
    <property type="project" value="TreeGrafter"/>
</dbReference>
<dbReference type="GO" id="GO:0003723">
    <property type="term" value="F:RNA binding"/>
    <property type="evidence" value="ECO:0007669"/>
    <property type="project" value="UniProtKB-UniRule"/>
</dbReference>
<dbReference type="GO" id="GO:0070929">
    <property type="term" value="P:trans-translation"/>
    <property type="evidence" value="ECO:0007669"/>
    <property type="project" value="UniProtKB-UniRule"/>
</dbReference>
<dbReference type="CDD" id="cd09294">
    <property type="entry name" value="SmpB"/>
    <property type="match status" value="1"/>
</dbReference>
<dbReference type="Gene3D" id="2.40.280.10">
    <property type="match status" value="1"/>
</dbReference>
<dbReference type="HAMAP" id="MF_00023">
    <property type="entry name" value="SmpB"/>
    <property type="match status" value="1"/>
</dbReference>
<dbReference type="InterPro" id="IPR023620">
    <property type="entry name" value="SmpB"/>
</dbReference>
<dbReference type="InterPro" id="IPR000037">
    <property type="entry name" value="SsrA-bd_prot"/>
</dbReference>
<dbReference type="InterPro" id="IPR020081">
    <property type="entry name" value="SsrA-bd_prot_CS"/>
</dbReference>
<dbReference type="NCBIfam" id="NF003843">
    <property type="entry name" value="PRK05422.1"/>
    <property type="match status" value="1"/>
</dbReference>
<dbReference type="NCBIfam" id="TIGR00086">
    <property type="entry name" value="smpB"/>
    <property type="match status" value="1"/>
</dbReference>
<dbReference type="PANTHER" id="PTHR30308:SF2">
    <property type="entry name" value="SSRA-BINDING PROTEIN"/>
    <property type="match status" value="1"/>
</dbReference>
<dbReference type="PANTHER" id="PTHR30308">
    <property type="entry name" value="TMRNA-BINDING COMPONENT OF TRANS-TRANSLATION TAGGING COMPLEX"/>
    <property type="match status" value="1"/>
</dbReference>
<dbReference type="Pfam" id="PF01668">
    <property type="entry name" value="SmpB"/>
    <property type="match status" value="1"/>
</dbReference>
<dbReference type="SUPFAM" id="SSF74982">
    <property type="entry name" value="Small protein B (SmpB)"/>
    <property type="match status" value="1"/>
</dbReference>
<dbReference type="PROSITE" id="PS01317">
    <property type="entry name" value="SSRP"/>
    <property type="match status" value="1"/>
</dbReference>
<gene>
    <name evidence="1" type="primary">smpB</name>
    <name type="ordered locus">Saro_1444</name>
</gene>
<sequence>MARPVHPEFDKKKVVAENRRARFEYFIEETYEAGICLTGTEVKSLRFGEGSIAESYAEVKNGEVWLVNSNVPEFSHGNRFNHVPKRPRKLLLKERQIAKFTGAVERKGMTLVPLSIYFNSRGRAKVELALAKGKNAADKRTTIKERDWKREKARIMKDHG</sequence>
<evidence type="ECO:0000255" key="1">
    <source>
        <dbReference type="HAMAP-Rule" id="MF_00023"/>
    </source>
</evidence>
<reference key="1">
    <citation type="submission" date="2006-01" db="EMBL/GenBank/DDBJ databases">
        <title>Complete sequence of Novosphingobium aromaticivorans DSM 12444.</title>
        <authorList>
            <consortium name="US DOE Joint Genome Institute"/>
            <person name="Copeland A."/>
            <person name="Lucas S."/>
            <person name="Lapidus A."/>
            <person name="Barry K."/>
            <person name="Detter J.C."/>
            <person name="Glavina T."/>
            <person name="Hammon N."/>
            <person name="Israni S."/>
            <person name="Pitluck S."/>
            <person name="Chain P."/>
            <person name="Malfatti S."/>
            <person name="Shin M."/>
            <person name="Vergez L."/>
            <person name="Schmutz J."/>
            <person name="Larimer F."/>
            <person name="Land M."/>
            <person name="Kyrpides N."/>
            <person name="Ivanova N."/>
            <person name="Fredrickson J."/>
            <person name="Balkwill D."/>
            <person name="Romine M.F."/>
            <person name="Richardson P."/>
        </authorList>
    </citation>
    <scope>NUCLEOTIDE SEQUENCE [LARGE SCALE GENOMIC DNA]</scope>
    <source>
        <strain>ATCC 700278 / DSM 12444 / CCUG 56034 / CIP 105152 / NBRC 16084 / F199</strain>
    </source>
</reference>
<organism>
    <name type="scientific">Novosphingobium aromaticivorans (strain ATCC 700278 / DSM 12444 / CCUG 56034 / CIP 105152 / NBRC 16084 / F199)</name>
    <dbReference type="NCBI Taxonomy" id="279238"/>
    <lineage>
        <taxon>Bacteria</taxon>
        <taxon>Pseudomonadati</taxon>
        <taxon>Pseudomonadota</taxon>
        <taxon>Alphaproteobacteria</taxon>
        <taxon>Sphingomonadales</taxon>
        <taxon>Sphingomonadaceae</taxon>
        <taxon>Novosphingobium</taxon>
    </lineage>
</organism>
<keyword id="KW-0963">Cytoplasm</keyword>
<keyword id="KW-1185">Reference proteome</keyword>
<keyword id="KW-0694">RNA-binding</keyword>
<accession>Q2G8D5</accession>
<protein>
    <recommendedName>
        <fullName evidence="1">SsrA-binding protein</fullName>
    </recommendedName>
    <alternativeName>
        <fullName evidence="1">Small protein B</fullName>
    </alternativeName>
</protein>
<comment type="function">
    <text evidence="1">Required for rescue of stalled ribosomes mediated by trans-translation. Binds to transfer-messenger RNA (tmRNA), required for stable association of tmRNA with ribosomes. tmRNA and SmpB together mimic tRNA shape, replacing the anticodon stem-loop with SmpB. tmRNA is encoded by the ssrA gene; the 2 termini fold to resemble tRNA(Ala) and it encodes a 'tag peptide', a short internal open reading frame. During trans-translation Ala-aminoacylated tmRNA acts like a tRNA, entering the A-site of stalled ribosomes, displacing the stalled mRNA. The ribosome then switches to translate the ORF on the tmRNA; the nascent peptide is terminated with the 'tag peptide' encoded by the tmRNA and targeted for degradation. The ribosome is freed to recommence translation, which seems to be the essential function of trans-translation.</text>
</comment>
<comment type="subcellular location">
    <subcellularLocation>
        <location evidence="1">Cytoplasm</location>
    </subcellularLocation>
    <text evidence="1">The tmRNA-SmpB complex associates with stalled 70S ribosomes.</text>
</comment>
<comment type="similarity">
    <text evidence="1">Belongs to the SmpB family.</text>
</comment>
<name>SSRP_NOVAD</name>